<dbReference type="EMBL" id="CP000546">
    <property type="protein sequence ID" value="ABN01231.1"/>
    <property type="molecule type" value="Genomic_DNA"/>
</dbReference>
<dbReference type="RefSeq" id="WP_004197937.1">
    <property type="nucleotide sequence ID" value="NC_008836.1"/>
</dbReference>
<dbReference type="SMR" id="A2S7K0"/>
<dbReference type="GeneID" id="98107136"/>
<dbReference type="KEGG" id="bml:BMA10229_A1948"/>
<dbReference type="HOGENOM" id="CLU_072439_5_0_4"/>
<dbReference type="Proteomes" id="UP000002283">
    <property type="component" value="Chromosome I"/>
</dbReference>
<dbReference type="GO" id="GO:1990904">
    <property type="term" value="C:ribonucleoprotein complex"/>
    <property type="evidence" value="ECO:0007669"/>
    <property type="project" value="UniProtKB-KW"/>
</dbReference>
<dbReference type="GO" id="GO:0005840">
    <property type="term" value="C:ribosome"/>
    <property type="evidence" value="ECO:0007669"/>
    <property type="project" value="UniProtKB-KW"/>
</dbReference>
<dbReference type="GO" id="GO:0019843">
    <property type="term" value="F:rRNA binding"/>
    <property type="evidence" value="ECO:0007669"/>
    <property type="project" value="UniProtKB-UniRule"/>
</dbReference>
<dbReference type="GO" id="GO:0003735">
    <property type="term" value="F:structural constituent of ribosome"/>
    <property type="evidence" value="ECO:0007669"/>
    <property type="project" value="InterPro"/>
</dbReference>
<dbReference type="GO" id="GO:0006412">
    <property type="term" value="P:translation"/>
    <property type="evidence" value="ECO:0007669"/>
    <property type="project" value="UniProtKB-UniRule"/>
</dbReference>
<dbReference type="FunFam" id="3.30.420.80:FF:000001">
    <property type="entry name" value="30S ribosomal protein S11"/>
    <property type="match status" value="1"/>
</dbReference>
<dbReference type="Gene3D" id="3.30.420.80">
    <property type="entry name" value="Ribosomal protein S11"/>
    <property type="match status" value="1"/>
</dbReference>
<dbReference type="HAMAP" id="MF_01310">
    <property type="entry name" value="Ribosomal_uS11"/>
    <property type="match status" value="1"/>
</dbReference>
<dbReference type="InterPro" id="IPR001971">
    <property type="entry name" value="Ribosomal_uS11"/>
</dbReference>
<dbReference type="InterPro" id="IPR019981">
    <property type="entry name" value="Ribosomal_uS11_bac-type"/>
</dbReference>
<dbReference type="InterPro" id="IPR018102">
    <property type="entry name" value="Ribosomal_uS11_CS"/>
</dbReference>
<dbReference type="InterPro" id="IPR036967">
    <property type="entry name" value="Ribosomal_uS11_sf"/>
</dbReference>
<dbReference type="NCBIfam" id="NF003698">
    <property type="entry name" value="PRK05309.1"/>
    <property type="match status" value="1"/>
</dbReference>
<dbReference type="NCBIfam" id="TIGR03632">
    <property type="entry name" value="uS11_bact"/>
    <property type="match status" value="1"/>
</dbReference>
<dbReference type="PANTHER" id="PTHR11759">
    <property type="entry name" value="40S RIBOSOMAL PROTEIN S14/30S RIBOSOMAL PROTEIN S11"/>
    <property type="match status" value="1"/>
</dbReference>
<dbReference type="Pfam" id="PF00411">
    <property type="entry name" value="Ribosomal_S11"/>
    <property type="match status" value="1"/>
</dbReference>
<dbReference type="PIRSF" id="PIRSF002131">
    <property type="entry name" value="Ribosomal_S11"/>
    <property type="match status" value="1"/>
</dbReference>
<dbReference type="SUPFAM" id="SSF53137">
    <property type="entry name" value="Translational machinery components"/>
    <property type="match status" value="1"/>
</dbReference>
<dbReference type="PROSITE" id="PS00054">
    <property type="entry name" value="RIBOSOMAL_S11"/>
    <property type="match status" value="1"/>
</dbReference>
<reference key="1">
    <citation type="journal article" date="2010" name="Genome Biol. Evol.">
        <title>Continuing evolution of Burkholderia mallei through genome reduction and large-scale rearrangements.</title>
        <authorList>
            <person name="Losada L."/>
            <person name="Ronning C.M."/>
            <person name="DeShazer D."/>
            <person name="Woods D."/>
            <person name="Fedorova N."/>
            <person name="Kim H.S."/>
            <person name="Shabalina S.A."/>
            <person name="Pearson T.R."/>
            <person name="Brinkac L."/>
            <person name="Tan P."/>
            <person name="Nandi T."/>
            <person name="Crabtree J."/>
            <person name="Badger J."/>
            <person name="Beckstrom-Sternberg S."/>
            <person name="Saqib M."/>
            <person name="Schutzer S.E."/>
            <person name="Keim P."/>
            <person name="Nierman W.C."/>
        </authorList>
    </citation>
    <scope>NUCLEOTIDE SEQUENCE [LARGE SCALE GENOMIC DNA]</scope>
    <source>
        <strain>NCTC 10229</strain>
    </source>
</reference>
<comment type="function">
    <text evidence="1">Located on the platform of the 30S subunit, it bridges several disparate RNA helices of the 16S rRNA. Forms part of the Shine-Dalgarno cleft in the 70S ribosome.</text>
</comment>
<comment type="subunit">
    <text evidence="1">Part of the 30S ribosomal subunit. Interacts with proteins S7 and S18. Binds to IF-3.</text>
</comment>
<comment type="similarity">
    <text evidence="1">Belongs to the universal ribosomal protein uS11 family.</text>
</comment>
<keyword id="KW-0687">Ribonucleoprotein</keyword>
<keyword id="KW-0689">Ribosomal protein</keyword>
<keyword id="KW-0694">RNA-binding</keyword>
<keyword id="KW-0699">rRNA-binding</keyword>
<proteinExistence type="inferred from homology"/>
<feature type="chain" id="PRO_1000051825" description="Small ribosomal subunit protein uS11">
    <location>
        <begin position="1"/>
        <end position="133"/>
    </location>
</feature>
<evidence type="ECO:0000255" key="1">
    <source>
        <dbReference type="HAMAP-Rule" id="MF_01310"/>
    </source>
</evidence>
<evidence type="ECO:0000305" key="2"/>
<gene>
    <name evidence="1" type="primary">rpsK</name>
    <name type="ordered locus">BMA10229_A1948</name>
</gene>
<name>RS11_BURM9</name>
<organism>
    <name type="scientific">Burkholderia mallei (strain NCTC 10229)</name>
    <dbReference type="NCBI Taxonomy" id="412022"/>
    <lineage>
        <taxon>Bacteria</taxon>
        <taxon>Pseudomonadati</taxon>
        <taxon>Pseudomonadota</taxon>
        <taxon>Betaproteobacteria</taxon>
        <taxon>Burkholderiales</taxon>
        <taxon>Burkholderiaceae</taxon>
        <taxon>Burkholderia</taxon>
        <taxon>pseudomallei group</taxon>
    </lineage>
</organism>
<accession>A2S7K0</accession>
<sequence>MAKASNTAAQRVRKKVKKNVAEGVVHVHASFNNTIITITDRQGNALAWATSGGQGFKGSRKSTPFAAQVAAESAGRVAMEYGVKNLEVRIKGPGPGRESAVRALHGLGIKITAISDVTPIPHNGCRPPKRRRI</sequence>
<protein>
    <recommendedName>
        <fullName evidence="1">Small ribosomal subunit protein uS11</fullName>
    </recommendedName>
    <alternativeName>
        <fullName evidence="2">30S ribosomal protein S11</fullName>
    </alternativeName>
</protein>